<comment type="function">
    <text>Thin filament-associated protein that is implicated in the regulation and modulation of smooth muscle contraction. It is capable of binding to actin, calmodulin and tropomyosin. The interaction of calponin with actin inhibits the actomyosin Mg-ATPase activity.</text>
</comment>
<comment type="tissue specificity">
    <text>Smooth muscle, and tissues containing significant amounts of smooth muscle.</text>
</comment>
<comment type="similarity">
    <text evidence="3">Belongs to the calponin family.</text>
</comment>
<dbReference type="EMBL" id="Z19543">
    <property type="protein sequence ID" value="CAA79603.1"/>
    <property type="molecule type" value="mRNA"/>
</dbReference>
<dbReference type="EMBL" id="BC009144">
    <property type="protein sequence ID" value="AAH09144.1"/>
    <property type="molecule type" value="mRNA"/>
</dbReference>
<dbReference type="EMBL" id="BC018482">
    <property type="protein sequence ID" value="AAH18482.1"/>
    <property type="molecule type" value="mRNA"/>
</dbReference>
<dbReference type="CCDS" id="CCDS24003.1"/>
<dbReference type="PIR" id="S36147">
    <property type="entry name" value="S31485"/>
</dbReference>
<dbReference type="RefSeq" id="NP_031751.1">
    <property type="nucleotide sequence ID" value="NM_007725.2"/>
</dbReference>
<dbReference type="SMR" id="Q08093"/>
<dbReference type="BioGRID" id="198791">
    <property type="interactions" value="5"/>
</dbReference>
<dbReference type="FunCoup" id="Q08093">
    <property type="interactions" value="211"/>
</dbReference>
<dbReference type="IntAct" id="Q08093">
    <property type="interactions" value="1"/>
</dbReference>
<dbReference type="MINT" id="Q08093"/>
<dbReference type="STRING" id="10090.ENSMUSP00000004784"/>
<dbReference type="GlyGen" id="Q08093">
    <property type="glycosylation" value="1 site, 1 O-linked glycan (1 site)"/>
</dbReference>
<dbReference type="iPTMnet" id="Q08093"/>
<dbReference type="PhosphoSitePlus" id="Q08093"/>
<dbReference type="jPOST" id="Q08093"/>
<dbReference type="PaxDb" id="10090-ENSMUSP00000004784"/>
<dbReference type="PeptideAtlas" id="Q08093"/>
<dbReference type="ProteomicsDB" id="283453"/>
<dbReference type="Pumba" id="Q08093"/>
<dbReference type="Antibodypedia" id="22499">
    <property type="antibodies" value="409 antibodies from 38 providers"/>
</dbReference>
<dbReference type="DNASU" id="12798"/>
<dbReference type="Ensembl" id="ENSMUST00000004784.11">
    <property type="protein sequence ID" value="ENSMUSP00000004784.5"/>
    <property type="gene ID" value="ENSMUSG00000004665.11"/>
</dbReference>
<dbReference type="GeneID" id="12798"/>
<dbReference type="KEGG" id="mmu:12798"/>
<dbReference type="UCSC" id="uc007gaz.1">
    <property type="organism name" value="mouse"/>
</dbReference>
<dbReference type="AGR" id="MGI:105093"/>
<dbReference type="CTD" id="1265"/>
<dbReference type="MGI" id="MGI:105093">
    <property type="gene designation" value="Cnn2"/>
</dbReference>
<dbReference type="VEuPathDB" id="HostDB:ENSMUSG00000004665"/>
<dbReference type="eggNOG" id="KOG2046">
    <property type="taxonomic scope" value="Eukaryota"/>
</dbReference>
<dbReference type="GeneTree" id="ENSGT00940000154355"/>
<dbReference type="HOGENOM" id="CLU_055232_0_2_1"/>
<dbReference type="InParanoid" id="Q08093"/>
<dbReference type="OMA" id="DSKYCPK"/>
<dbReference type="OrthoDB" id="21595at2759"/>
<dbReference type="PhylomeDB" id="Q08093"/>
<dbReference type="TreeFam" id="TF313921"/>
<dbReference type="Reactome" id="R-MMU-6798695">
    <property type="pathway name" value="Neutrophil degranulation"/>
</dbReference>
<dbReference type="BioGRID-ORCS" id="12798">
    <property type="hits" value="1 hit in 77 CRISPR screens"/>
</dbReference>
<dbReference type="ChiTaRS" id="Cnn2">
    <property type="organism name" value="mouse"/>
</dbReference>
<dbReference type="PRO" id="PR:Q08093"/>
<dbReference type="Proteomes" id="UP000000589">
    <property type="component" value="Chromosome 10"/>
</dbReference>
<dbReference type="RNAct" id="Q08093">
    <property type="molecule type" value="protein"/>
</dbReference>
<dbReference type="Bgee" id="ENSMUSG00000004665">
    <property type="expression patterns" value="Expressed in external carotid artery and 251 other cell types or tissues"/>
</dbReference>
<dbReference type="ExpressionAtlas" id="Q08093">
    <property type="expression patterns" value="baseline and differential"/>
</dbReference>
<dbReference type="GO" id="GO:0001725">
    <property type="term" value="C:stress fiber"/>
    <property type="evidence" value="ECO:0000266"/>
    <property type="project" value="MGI"/>
</dbReference>
<dbReference type="GO" id="GO:0003779">
    <property type="term" value="F:actin binding"/>
    <property type="evidence" value="ECO:0007669"/>
    <property type="project" value="UniProtKB-KW"/>
</dbReference>
<dbReference type="GO" id="GO:0005516">
    <property type="term" value="F:calmodulin binding"/>
    <property type="evidence" value="ECO:0007669"/>
    <property type="project" value="UniProtKB-KW"/>
</dbReference>
<dbReference type="GO" id="GO:0031032">
    <property type="term" value="P:actomyosin structure organization"/>
    <property type="evidence" value="ECO:0007669"/>
    <property type="project" value="InterPro"/>
</dbReference>
<dbReference type="GO" id="GO:0071260">
    <property type="term" value="P:cellular response to mechanical stimulus"/>
    <property type="evidence" value="ECO:0000266"/>
    <property type="project" value="MGI"/>
</dbReference>
<dbReference type="GO" id="GO:0051649">
    <property type="term" value="P:establishment of localization in cell"/>
    <property type="evidence" value="ECO:0000315"/>
    <property type="project" value="MGI"/>
</dbReference>
<dbReference type="GO" id="GO:0030097">
    <property type="term" value="P:hemopoiesis"/>
    <property type="evidence" value="ECO:0000315"/>
    <property type="project" value="MGI"/>
</dbReference>
<dbReference type="GO" id="GO:1905517">
    <property type="term" value="P:macrophage migration"/>
    <property type="evidence" value="ECO:0000315"/>
    <property type="project" value="MGI"/>
</dbReference>
<dbReference type="GO" id="GO:1905522">
    <property type="term" value="P:negative regulation of macrophage migration"/>
    <property type="evidence" value="ECO:0000315"/>
    <property type="project" value="MGI"/>
</dbReference>
<dbReference type="GO" id="GO:0050765">
    <property type="term" value="P:negative regulation of phagocytosis"/>
    <property type="evidence" value="ECO:0000315"/>
    <property type="project" value="MGI"/>
</dbReference>
<dbReference type="GO" id="GO:0006909">
    <property type="term" value="P:phagocytosis"/>
    <property type="evidence" value="ECO:0000315"/>
    <property type="project" value="MGI"/>
</dbReference>
<dbReference type="GO" id="GO:0010628">
    <property type="term" value="P:positive regulation of gene expression"/>
    <property type="evidence" value="ECO:0000315"/>
    <property type="project" value="MGI"/>
</dbReference>
<dbReference type="GO" id="GO:0032970">
    <property type="term" value="P:regulation of actin filament-based process"/>
    <property type="evidence" value="ECO:0000266"/>
    <property type="project" value="MGI"/>
</dbReference>
<dbReference type="GO" id="GO:0070663">
    <property type="term" value="P:regulation of leukocyte proliferation"/>
    <property type="evidence" value="ECO:0000315"/>
    <property type="project" value="MGI"/>
</dbReference>
<dbReference type="GO" id="GO:0032944">
    <property type="term" value="P:regulation of mononuclear cell proliferation"/>
    <property type="evidence" value="ECO:0000315"/>
    <property type="project" value="MGI"/>
</dbReference>
<dbReference type="GO" id="GO:0042060">
    <property type="term" value="P:wound healing"/>
    <property type="evidence" value="ECO:0000315"/>
    <property type="project" value="MGI"/>
</dbReference>
<dbReference type="CDD" id="cd21283">
    <property type="entry name" value="CH_CNN2"/>
    <property type="match status" value="1"/>
</dbReference>
<dbReference type="FunFam" id="1.10.418.10:FF:000040">
    <property type="entry name" value="Calponin"/>
    <property type="match status" value="1"/>
</dbReference>
<dbReference type="Gene3D" id="1.10.418.10">
    <property type="entry name" value="Calponin-like domain"/>
    <property type="match status" value="1"/>
</dbReference>
<dbReference type="InterPro" id="IPR050606">
    <property type="entry name" value="Calponin-like"/>
</dbReference>
<dbReference type="InterPro" id="IPR001997">
    <property type="entry name" value="Calponin/LIMCH1"/>
</dbReference>
<dbReference type="InterPro" id="IPR000557">
    <property type="entry name" value="Calponin_repeat"/>
</dbReference>
<dbReference type="InterPro" id="IPR001715">
    <property type="entry name" value="CH_dom"/>
</dbReference>
<dbReference type="InterPro" id="IPR036872">
    <property type="entry name" value="CH_dom_sf"/>
</dbReference>
<dbReference type="InterPro" id="IPR003096">
    <property type="entry name" value="SM22_calponin"/>
</dbReference>
<dbReference type="PANTHER" id="PTHR47385">
    <property type="entry name" value="CALPONIN"/>
    <property type="match status" value="1"/>
</dbReference>
<dbReference type="PANTHER" id="PTHR47385:SF7">
    <property type="entry name" value="CALPONIN-2"/>
    <property type="match status" value="1"/>
</dbReference>
<dbReference type="Pfam" id="PF00402">
    <property type="entry name" value="Calponin"/>
    <property type="match status" value="3"/>
</dbReference>
<dbReference type="Pfam" id="PF00307">
    <property type="entry name" value="CH"/>
    <property type="match status" value="1"/>
</dbReference>
<dbReference type="PRINTS" id="PR00889">
    <property type="entry name" value="CALPONIN"/>
</dbReference>
<dbReference type="PRINTS" id="PR00888">
    <property type="entry name" value="SM22CALPONIN"/>
</dbReference>
<dbReference type="SMART" id="SM00033">
    <property type="entry name" value="CH"/>
    <property type="match status" value="1"/>
</dbReference>
<dbReference type="SUPFAM" id="SSF47576">
    <property type="entry name" value="Calponin-homology domain, CH-domain"/>
    <property type="match status" value="1"/>
</dbReference>
<dbReference type="PROSITE" id="PS01052">
    <property type="entry name" value="CALPONIN_1"/>
    <property type="match status" value="3"/>
</dbReference>
<dbReference type="PROSITE" id="PS51122">
    <property type="entry name" value="CALPONIN_2"/>
    <property type="match status" value="3"/>
</dbReference>
<dbReference type="PROSITE" id="PS50021">
    <property type="entry name" value="CH"/>
    <property type="match status" value="1"/>
</dbReference>
<name>CNN2_MOUSE</name>
<proteinExistence type="evidence at protein level"/>
<reference key="1">
    <citation type="journal article" date="1993" name="FEBS Lett.">
        <title>Mammalian calponin. Identification and expression of genetic variants.</title>
        <authorList>
            <person name="Strasser P."/>
            <person name="Gimona M."/>
            <person name="Moessler H."/>
            <person name="Herzog M."/>
            <person name="Small J.V."/>
        </authorList>
    </citation>
    <scope>NUCLEOTIDE SEQUENCE [MRNA]</scope>
    <source>
        <tissue>Smooth muscle</tissue>
    </source>
</reference>
<reference key="2">
    <citation type="journal article" date="2004" name="Genome Res.">
        <title>The status, quality, and expansion of the NIH full-length cDNA project: the Mammalian Gene Collection (MGC).</title>
        <authorList>
            <consortium name="The MGC Project Team"/>
        </authorList>
    </citation>
    <scope>NUCLEOTIDE SEQUENCE [LARGE SCALE MRNA]</scope>
    <source>
        <strain>Czech II</strain>
        <strain>FVB/N</strain>
    </source>
</reference>
<reference key="3">
    <citation type="journal article" date="2010" name="Cell">
        <title>A tissue-specific atlas of mouse protein phosphorylation and expression.</title>
        <authorList>
            <person name="Huttlin E.L."/>
            <person name="Jedrychowski M.P."/>
            <person name="Elias J.E."/>
            <person name="Goswami T."/>
            <person name="Rad R."/>
            <person name="Beausoleil S.A."/>
            <person name="Villen J."/>
            <person name="Haas W."/>
            <person name="Sowa M.E."/>
            <person name="Gygi S.P."/>
        </authorList>
    </citation>
    <scope>IDENTIFICATION BY MASS SPECTROMETRY [LARGE SCALE ANALYSIS]</scope>
    <source>
        <tissue>Heart</tissue>
        <tissue>Kidney</tissue>
        <tissue>Liver</tissue>
        <tissue>Lung</tissue>
        <tissue>Spleen</tissue>
        <tissue>Testis</tissue>
    </source>
</reference>
<reference key="4">
    <citation type="journal article" date="2013" name="Mol. Cell">
        <title>SIRT5-mediated lysine desuccinylation impacts diverse metabolic pathways.</title>
        <authorList>
            <person name="Park J."/>
            <person name="Chen Y."/>
            <person name="Tishkoff D.X."/>
            <person name="Peng C."/>
            <person name="Tan M."/>
            <person name="Dai L."/>
            <person name="Xie Z."/>
            <person name="Zhang Y."/>
            <person name="Zwaans B.M."/>
            <person name="Skinner M.E."/>
            <person name="Lombard D.B."/>
            <person name="Zhao Y."/>
        </authorList>
    </citation>
    <scope>ACETYLATION [LARGE SCALE ANALYSIS] AT SER-2 AND LYS-8</scope>
    <scope>CLEAVAGE OF INITIATOR METHIONINE [LARGE SCALE ANALYSIS]</scope>
    <scope>IDENTIFICATION BY MASS SPECTROMETRY [LARGE SCALE ANALYSIS]</scope>
    <source>
        <tissue>Embryonic fibroblast</tissue>
    </source>
</reference>
<accession>Q08093</accession>
<gene>
    <name type="primary">Cnn2</name>
</gene>
<organism>
    <name type="scientific">Mus musculus</name>
    <name type="common">Mouse</name>
    <dbReference type="NCBI Taxonomy" id="10090"/>
    <lineage>
        <taxon>Eukaryota</taxon>
        <taxon>Metazoa</taxon>
        <taxon>Chordata</taxon>
        <taxon>Craniata</taxon>
        <taxon>Vertebrata</taxon>
        <taxon>Euteleostomi</taxon>
        <taxon>Mammalia</taxon>
        <taxon>Eutheria</taxon>
        <taxon>Euarchontoglires</taxon>
        <taxon>Glires</taxon>
        <taxon>Rodentia</taxon>
        <taxon>Myomorpha</taxon>
        <taxon>Muroidea</taxon>
        <taxon>Muridae</taxon>
        <taxon>Murinae</taxon>
        <taxon>Mus</taxon>
        <taxon>Mus</taxon>
    </lineage>
</organism>
<protein>
    <recommendedName>
        <fullName>Calponin-2</fullName>
    </recommendedName>
    <alternativeName>
        <fullName>Calponin H2, smooth muscle</fullName>
    </alternativeName>
    <alternativeName>
        <fullName>Neutral calponin</fullName>
    </alternativeName>
</protein>
<keyword id="KW-0007">Acetylation</keyword>
<keyword id="KW-0009">Actin-binding</keyword>
<keyword id="KW-0112">Calmodulin-binding</keyword>
<keyword id="KW-0597">Phosphoprotein</keyword>
<keyword id="KW-1185">Reference proteome</keyword>
<keyword id="KW-0677">Repeat</keyword>
<evidence type="ECO:0000250" key="1">
    <source>
        <dbReference type="UniProtKB" id="Q99439"/>
    </source>
</evidence>
<evidence type="ECO:0000255" key="2">
    <source>
        <dbReference type="PROSITE-ProRule" id="PRU00044"/>
    </source>
</evidence>
<evidence type="ECO:0000305" key="3"/>
<evidence type="ECO:0007744" key="4">
    <source>
    </source>
</evidence>
<sequence>MSSTQFNKGPSYGLSAEVKNRLLSKYDPQKEAELRSWIEGLTGLSIGPDFQKGLKDGVILCTLMNKLQPGSVPKINRSMQNWHQLENLSNFIKAMVSYGMNPVDLFEANDLFESGNMTQVQVSLLALAGKAKTKGLQSGVDIGVKYSEKQERNFDDATMKAGQCVIGLQMGTNKCASQSGMTAYGTRRHLYDPKNHILPPMDHCTISLQMGTNKCASQVGMTAPGTRRHIYDTKLGTDKCDNSSMSLQMGYTQGANQSGQVFGLGRQIYDPKYCPQGSAADGAPAGDGQGEAPEYLAYCQEEAGY</sequence>
<feature type="initiator methionine" description="Removed" evidence="4">
    <location>
        <position position="1"/>
    </location>
</feature>
<feature type="chain" id="PRO_0000204774" description="Calponin-2">
    <location>
        <begin position="2"/>
        <end position="305"/>
    </location>
</feature>
<feature type="domain" description="Calponin-homology (CH)" evidence="2">
    <location>
        <begin position="28"/>
        <end position="132"/>
    </location>
</feature>
<feature type="repeat" description="Calponin-like 1">
    <location>
        <begin position="166"/>
        <end position="191"/>
    </location>
</feature>
<feature type="repeat" description="Calponin-like 2">
    <location>
        <begin position="206"/>
        <end position="231"/>
    </location>
</feature>
<feature type="repeat" description="Calponin-like 3">
    <location>
        <begin position="245"/>
        <end position="269"/>
    </location>
</feature>
<feature type="modified residue" description="N-acetylserine" evidence="4">
    <location>
        <position position="2"/>
    </location>
</feature>
<feature type="modified residue" description="N6-acetyllysine" evidence="4">
    <location>
        <position position="8"/>
    </location>
</feature>
<feature type="modified residue" description="N6-acetyllysine" evidence="1">
    <location>
        <position position="25"/>
    </location>
</feature>
<feature type="modified residue" description="Phosphoserine" evidence="1">
    <location>
        <position position="138"/>
    </location>
</feature>